<feature type="chain" id="PRO_0000402013" description="Methylthioribose-1-phosphate isomerase">
    <location>
        <begin position="1"/>
        <end position="387"/>
    </location>
</feature>
<feature type="active site" description="Proton donor" evidence="1">
    <location>
        <position position="257"/>
    </location>
</feature>
<feature type="site" description="Transition state stabilizer" evidence="1">
    <location>
        <position position="175"/>
    </location>
</feature>
<reference key="1">
    <citation type="journal article" date="2005" name="Nature">
        <title>Genomic sequence of the pathogenic and allergenic filamentous fungus Aspergillus fumigatus.</title>
        <authorList>
            <person name="Nierman W.C."/>
            <person name="Pain A."/>
            <person name="Anderson M.J."/>
            <person name="Wortman J.R."/>
            <person name="Kim H.S."/>
            <person name="Arroyo J."/>
            <person name="Berriman M."/>
            <person name="Abe K."/>
            <person name="Archer D.B."/>
            <person name="Bermejo C."/>
            <person name="Bennett J.W."/>
            <person name="Bowyer P."/>
            <person name="Chen D."/>
            <person name="Collins M."/>
            <person name="Coulsen R."/>
            <person name="Davies R."/>
            <person name="Dyer P.S."/>
            <person name="Farman M.L."/>
            <person name="Fedorova N."/>
            <person name="Fedorova N.D."/>
            <person name="Feldblyum T.V."/>
            <person name="Fischer R."/>
            <person name="Fosker N."/>
            <person name="Fraser A."/>
            <person name="Garcia J.L."/>
            <person name="Garcia M.J."/>
            <person name="Goble A."/>
            <person name="Goldman G.H."/>
            <person name="Gomi K."/>
            <person name="Griffith-Jones S."/>
            <person name="Gwilliam R."/>
            <person name="Haas B.J."/>
            <person name="Haas H."/>
            <person name="Harris D.E."/>
            <person name="Horiuchi H."/>
            <person name="Huang J."/>
            <person name="Humphray S."/>
            <person name="Jimenez J."/>
            <person name="Keller N."/>
            <person name="Khouri H."/>
            <person name="Kitamoto K."/>
            <person name="Kobayashi T."/>
            <person name="Konzack S."/>
            <person name="Kulkarni R."/>
            <person name="Kumagai T."/>
            <person name="Lafton A."/>
            <person name="Latge J.-P."/>
            <person name="Li W."/>
            <person name="Lord A."/>
            <person name="Lu C."/>
            <person name="Majoros W.H."/>
            <person name="May G.S."/>
            <person name="Miller B.L."/>
            <person name="Mohamoud Y."/>
            <person name="Molina M."/>
            <person name="Monod M."/>
            <person name="Mouyna I."/>
            <person name="Mulligan S."/>
            <person name="Murphy L.D."/>
            <person name="O'Neil S."/>
            <person name="Paulsen I."/>
            <person name="Penalva M.A."/>
            <person name="Pertea M."/>
            <person name="Price C."/>
            <person name="Pritchard B.L."/>
            <person name="Quail M.A."/>
            <person name="Rabbinowitsch E."/>
            <person name="Rawlins N."/>
            <person name="Rajandream M.A."/>
            <person name="Reichard U."/>
            <person name="Renauld H."/>
            <person name="Robson G.D."/>
            <person name="Rodriguez de Cordoba S."/>
            <person name="Rodriguez-Pena J.M."/>
            <person name="Ronning C.M."/>
            <person name="Rutter S."/>
            <person name="Salzberg S.L."/>
            <person name="Sanchez M."/>
            <person name="Sanchez-Ferrero J.C."/>
            <person name="Saunders D."/>
            <person name="Seeger K."/>
            <person name="Squares R."/>
            <person name="Squares S."/>
            <person name="Takeuchi M."/>
            <person name="Tekaia F."/>
            <person name="Turner G."/>
            <person name="Vazquez de Aldana C.R."/>
            <person name="Weidman J."/>
            <person name="White O."/>
            <person name="Woodward J.R."/>
            <person name="Yu J.-H."/>
            <person name="Fraser C.M."/>
            <person name="Galagan J.E."/>
            <person name="Asai K."/>
            <person name="Machida M."/>
            <person name="Hall N."/>
            <person name="Barrell B.G."/>
            <person name="Denning D.W."/>
        </authorList>
    </citation>
    <scope>NUCLEOTIDE SEQUENCE [LARGE SCALE GENOMIC DNA]</scope>
    <source>
        <strain>ATCC MYA-4609 / CBS 101355 / FGSC A1100 / Af293</strain>
    </source>
</reference>
<keyword id="KW-0028">Amino-acid biosynthesis</keyword>
<keyword id="KW-0963">Cytoplasm</keyword>
<keyword id="KW-0413">Isomerase</keyword>
<keyword id="KW-0486">Methionine biosynthesis</keyword>
<keyword id="KW-0539">Nucleus</keyword>
<keyword id="KW-1185">Reference proteome</keyword>
<sequence>MASILQAIRYSHGKLAIIDQLQLPYVEKFITIRTSEDAWHAIKEMRVRGAPAIAIVAALALASELNTLIIHDKLSSRAEEVKLFIREKLDYLVSSRPTAVNLSDAARKLESTISGHADTPGATGRTVAEAFIRAAEEMMTKDLDDNMKIGQNGAEWIIKHALARHKSTATVLTHCNTGSLATSGYGTALGVIRSLASKKALEHAYCTETRPYNQGSRLTAFELVHDRLPATLITDSMVAALLASTKAEVDAIVVGADRVAANGDTANKIGTYGLAVLAKYHGVKFLVAAPLTTIDLGTKSGEDIVIEERPSAEVTKIRGPVDGDHPADIVKLETVHIAAKGIDVWNPAFDVTPSTLIDGIITEVGVIEKEADGQFHLERLFIDNSAS</sequence>
<dbReference type="EC" id="5.3.1.23" evidence="1"/>
<dbReference type="EMBL" id="AAHF01000005">
    <property type="protein sequence ID" value="EAL90203.1"/>
    <property type="molecule type" value="Genomic_DNA"/>
</dbReference>
<dbReference type="RefSeq" id="XP_752241.1">
    <property type="nucleotide sequence ID" value="XM_747148.1"/>
</dbReference>
<dbReference type="SMR" id="Q4WNI1"/>
<dbReference type="FunCoup" id="Q4WNI1">
    <property type="interactions" value="723"/>
</dbReference>
<dbReference type="STRING" id="330879.Q4WNI1"/>
<dbReference type="EnsemblFungi" id="EAL90203">
    <property type="protein sequence ID" value="EAL90203"/>
    <property type="gene ID" value="AFUA_4G05830"/>
</dbReference>
<dbReference type="GeneID" id="3509012"/>
<dbReference type="KEGG" id="afm:AFUA_4G05830"/>
<dbReference type="VEuPathDB" id="FungiDB:Afu4g05830"/>
<dbReference type="eggNOG" id="KOG1468">
    <property type="taxonomic scope" value="Eukaryota"/>
</dbReference>
<dbReference type="HOGENOM" id="CLU_016218_1_3_1"/>
<dbReference type="InParanoid" id="Q4WNI1"/>
<dbReference type="OMA" id="CETRPLN"/>
<dbReference type="OrthoDB" id="2461at2759"/>
<dbReference type="UniPathway" id="UPA00904">
    <property type="reaction ID" value="UER00874"/>
</dbReference>
<dbReference type="Proteomes" id="UP000002530">
    <property type="component" value="Chromosome 4"/>
</dbReference>
<dbReference type="GO" id="GO:0005737">
    <property type="term" value="C:cytoplasm"/>
    <property type="evidence" value="ECO:0007669"/>
    <property type="project" value="UniProtKB-SubCell"/>
</dbReference>
<dbReference type="GO" id="GO:0005634">
    <property type="term" value="C:nucleus"/>
    <property type="evidence" value="ECO:0007669"/>
    <property type="project" value="UniProtKB-SubCell"/>
</dbReference>
<dbReference type="GO" id="GO:0046523">
    <property type="term" value="F:S-methyl-5-thioribose-1-phosphate isomerase activity"/>
    <property type="evidence" value="ECO:0000318"/>
    <property type="project" value="GO_Central"/>
</dbReference>
<dbReference type="GO" id="GO:0019509">
    <property type="term" value="P:L-methionine salvage from methylthioadenosine"/>
    <property type="evidence" value="ECO:0000318"/>
    <property type="project" value="GO_Central"/>
</dbReference>
<dbReference type="FunFam" id="1.20.120.420:FF:000002">
    <property type="entry name" value="Methylthioribose-1-phosphate isomerase"/>
    <property type="match status" value="1"/>
</dbReference>
<dbReference type="FunFam" id="3.40.50.10470:FF:000010">
    <property type="entry name" value="Methylthioribose-1-phosphate isomerase"/>
    <property type="match status" value="1"/>
</dbReference>
<dbReference type="Gene3D" id="1.20.120.420">
    <property type="entry name" value="translation initiation factor eif-2b, domain 1"/>
    <property type="match status" value="1"/>
</dbReference>
<dbReference type="Gene3D" id="3.40.50.10470">
    <property type="entry name" value="Translation initiation factor eif-2b, domain 2"/>
    <property type="match status" value="1"/>
</dbReference>
<dbReference type="HAMAP" id="MF_01678">
    <property type="entry name" value="Salvage_MtnA"/>
    <property type="match status" value="1"/>
</dbReference>
<dbReference type="InterPro" id="IPR000649">
    <property type="entry name" value="IF-2B-related"/>
</dbReference>
<dbReference type="InterPro" id="IPR005251">
    <property type="entry name" value="IF-M1Pi"/>
</dbReference>
<dbReference type="InterPro" id="IPR042529">
    <property type="entry name" value="IF_2B-like_C"/>
</dbReference>
<dbReference type="InterPro" id="IPR011559">
    <property type="entry name" value="Initiation_fac_2B_a/b/d"/>
</dbReference>
<dbReference type="InterPro" id="IPR027363">
    <property type="entry name" value="M1Pi_N"/>
</dbReference>
<dbReference type="InterPro" id="IPR037171">
    <property type="entry name" value="NagB/RpiA_transferase-like"/>
</dbReference>
<dbReference type="NCBIfam" id="TIGR00524">
    <property type="entry name" value="eIF-2B_rel"/>
    <property type="match status" value="1"/>
</dbReference>
<dbReference type="NCBIfam" id="NF004326">
    <property type="entry name" value="PRK05720.1"/>
    <property type="match status" value="1"/>
</dbReference>
<dbReference type="NCBIfam" id="TIGR00512">
    <property type="entry name" value="salvage_mtnA"/>
    <property type="match status" value="1"/>
</dbReference>
<dbReference type="PANTHER" id="PTHR43475">
    <property type="entry name" value="METHYLTHIORIBOSE-1-PHOSPHATE ISOMERASE"/>
    <property type="match status" value="1"/>
</dbReference>
<dbReference type="PANTHER" id="PTHR43475:SF1">
    <property type="entry name" value="METHYLTHIORIBOSE-1-PHOSPHATE ISOMERASE"/>
    <property type="match status" value="1"/>
</dbReference>
<dbReference type="Pfam" id="PF01008">
    <property type="entry name" value="IF-2B"/>
    <property type="match status" value="1"/>
</dbReference>
<dbReference type="SUPFAM" id="SSF100950">
    <property type="entry name" value="NagB/RpiA/CoA transferase-like"/>
    <property type="match status" value="1"/>
</dbReference>
<organism>
    <name type="scientific">Aspergillus fumigatus (strain ATCC MYA-4609 / CBS 101355 / FGSC A1100 / Af293)</name>
    <name type="common">Neosartorya fumigata</name>
    <dbReference type="NCBI Taxonomy" id="330879"/>
    <lineage>
        <taxon>Eukaryota</taxon>
        <taxon>Fungi</taxon>
        <taxon>Dikarya</taxon>
        <taxon>Ascomycota</taxon>
        <taxon>Pezizomycotina</taxon>
        <taxon>Eurotiomycetes</taxon>
        <taxon>Eurotiomycetidae</taxon>
        <taxon>Eurotiales</taxon>
        <taxon>Aspergillaceae</taxon>
        <taxon>Aspergillus</taxon>
        <taxon>Aspergillus subgen. Fumigati</taxon>
    </lineage>
</organism>
<comment type="function">
    <text evidence="1">Catalyzes the interconversion of methylthioribose-1-phosphate (MTR-1-P) into methylthioribulose-1-phosphate (MTRu-1-P).</text>
</comment>
<comment type="catalytic activity">
    <reaction evidence="1">
        <text>5-(methylsulfanyl)-alpha-D-ribose 1-phosphate = 5-(methylsulfanyl)-D-ribulose 1-phosphate</text>
        <dbReference type="Rhea" id="RHEA:19989"/>
        <dbReference type="ChEBI" id="CHEBI:58533"/>
        <dbReference type="ChEBI" id="CHEBI:58548"/>
        <dbReference type="EC" id="5.3.1.23"/>
    </reaction>
</comment>
<comment type="pathway">
    <text evidence="1">Amino-acid biosynthesis; L-methionine biosynthesis via salvage pathway; L-methionine from S-methyl-5-thio-alpha-D-ribose 1-phosphate: step 1/6.</text>
</comment>
<comment type="subcellular location">
    <subcellularLocation>
        <location evidence="1">Cytoplasm</location>
    </subcellularLocation>
    <subcellularLocation>
        <location evidence="1">Nucleus</location>
    </subcellularLocation>
</comment>
<comment type="similarity">
    <text evidence="1">Belongs to the eIF-2B alpha/beta/delta subunits family. MtnA subfamily.</text>
</comment>
<evidence type="ECO:0000255" key="1">
    <source>
        <dbReference type="HAMAP-Rule" id="MF_03119"/>
    </source>
</evidence>
<protein>
    <recommendedName>
        <fullName evidence="1">Methylthioribose-1-phosphate isomerase</fullName>
        <shortName evidence="1">M1Pi</shortName>
        <shortName evidence="1">MTR-1-P isomerase</shortName>
        <ecNumber evidence="1">5.3.1.23</ecNumber>
    </recommendedName>
    <alternativeName>
        <fullName evidence="1">S-methyl-5-thioribose-1-phosphate isomerase</fullName>
    </alternativeName>
    <alternativeName>
        <fullName evidence="1">Translation initiation factor eIF-2B subunit alpha/beta/delta-like protein</fullName>
    </alternativeName>
</protein>
<gene>
    <name type="primary">mri1</name>
    <name type="ORF">AFUA_4G05830</name>
</gene>
<name>MTNA_ASPFU</name>
<accession>Q4WNI1</accession>
<proteinExistence type="inferred from homology"/>